<proteinExistence type="inferred from homology"/>
<comment type="function">
    <text evidence="1">NDH-1 shuttles electrons from NADH, via FMN and iron-sulfur (Fe-S) centers, to quinones in the respiratory chain. Couples the redox reaction to proton translocation (for every two electrons transferred, four hydrogen ions are translocated across the cytoplasmic membrane), and thus conserves the redox energy in a proton gradient (By similarity).</text>
</comment>
<comment type="catalytic activity">
    <reaction evidence="2">
        <text>a quinone + NADH + 5 H(+)(in) = a quinol + NAD(+) + 4 H(+)(out)</text>
        <dbReference type="Rhea" id="RHEA:57888"/>
        <dbReference type="ChEBI" id="CHEBI:15378"/>
        <dbReference type="ChEBI" id="CHEBI:24646"/>
        <dbReference type="ChEBI" id="CHEBI:57540"/>
        <dbReference type="ChEBI" id="CHEBI:57945"/>
        <dbReference type="ChEBI" id="CHEBI:132124"/>
    </reaction>
</comment>
<comment type="cofactor">
    <cofactor evidence="2">
        <name>[4Fe-4S] cluster</name>
        <dbReference type="ChEBI" id="CHEBI:49883"/>
    </cofactor>
    <text evidence="2">Binds 1 [4Fe-4S] cluster.</text>
</comment>
<comment type="subunit">
    <text evidence="2">NDH-1 is composed of 14 different subunits. Subunits NuoB, C, D, E, F, and G constitute the peripheral sector of the complex.</text>
</comment>
<comment type="subcellular location">
    <subcellularLocation>
        <location evidence="2">Cell inner membrane</location>
        <topology evidence="2">Peripheral membrane protein</topology>
        <orientation evidence="2">Cytoplasmic side</orientation>
    </subcellularLocation>
</comment>
<comment type="similarity">
    <text evidence="2">Belongs to the complex I 20 kDa subunit family.</text>
</comment>
<protein>
    <recommendedName>
        <fullName evidence="2">NADH-quinone oxidoreductase subunit B</fullName>
        <ecNumber evidence="2">7.1.1.-</ecNumber>
    </recommendedName>
    <alternativeName>
        <fullName evidence="2">NADH dehydrogenase I subunit B</fullName>
    </alternativeName>
    <alternativeName>
        <fullName evidence="2">NDH-1 subunit B</fullName>
    </alternativeName>
</protein>
<organism>
    <name type="scientific">Hydrogenovibrio crunogenus (strain DSM 25203 / XCL-2)</name>
    <name type="common">Thiomicrospira crunogena</name>
    <dbReference type="NCBI Taxonomy" id="317025"/>
    <lineage>
        <taxon>Bacteria</taxon>
        <taxon>Pseudomonadati</taxon>
        <taxon>Pseudomonadota</taxon>
        <taxon>Gammaproteobacteria</taxon>
        <taxon>Thiotrichales</taxon>
        <taxon>Piscirickettsiaceae</taxon>
        <taxon>Hydrogenovibrio</taxon>
    </lineage>
</organism>
<dbReference type="EC" id="7.1.1.-" evidence="2"/>
<dbReference type="EMBL" id="CP000109">
    <property type="protein sequence ID" value="ABB41414.1"/>
    <property type="molecule type" value="Genomic_DNA"/>
</dbReference>
<dbReference type="SMR" id="Q31HF9"/>
<dbReference type="STRING" id="317025.Tcr_0818"/>
<dbReference type="KEGG" id="tcx:Tcr_0818"/>
<dbReference type="eggNOG" id="COG0377">
    <property type="taxonomic scope" value="Bacteria"/>
</dbReference>
<dbReference type="HOGENOM" id="CLU_055737_7_3_6"/>
<dbReference type="OrthoDB" id="9786737at2"/>
<dbReference type="GO" id="GO:0005886">
    <property type="term" value="C:plasma membrane"/>
    <property type="evidence" value="ECO:0007669"/>
    <property type="project" value="UniProtKB-SubCell"/>
</dbReference>
<dbReference type="GO" id="GO:0045271">
    <property type="term" value="C:respiratory chain complex I"/>
    <property type="evidence" value="ECO:0007669"/>
    <property type="project" value="TreeGrafter"/>
</dbReference>
<dbReference type="GO" id="GO:0051539">
    <property type="term" value="F:4 iron, 4 sulfur cluster binding"/>
    <property type="evidence" value="ECO:0007669"/>
    <property type="project" value="UniProtKB-KW"/>
</dbReference>
<dbReference type="GO" id="GO:0005506">
    <property type="term" value="F:iron ion binding"/>
    <property type="evidence" value="ECO:0007669"/>
    <property type="project" value="UniProtKB-UniRule"/>
</dbReference>
<dbReference type="GO" id="GO:0008137">
    <property type="term" value="F:NADH dehydrogenase (ubiquinone) activity"/>
    <property type="evidence" value="ECO:0007669"/>
    <property type="project" value="InterPro"/>
</dbReference>
<dbReference type="GO" id="GO:0050136">
    <property type="term" value="F:NADH:ubiquinone reductase (non-electrogenic) activity"/>
    <property type="evidence" value="ECO:0007669"/>
    <property type="project" value="UniProtKB-UniRule"/>
</dbReference>
<dbReference type="GO" id="GO:0048038">
    <property type="term" value="F:quinone binding"/>
    <property type="evidence" value="ECO:0007669"/>
    <property type="project" value="UniProtKB-KW"/>
</dbReference>
<dbReference type="GO" id="GO:0009060">
    <property type="term" value="P:aerobic respiration"/>
    <property type="evidence" value="ECO:0007669"/>
    <property type="project" value="TreeGrafter"/>
</dbReference>
<dbReference type="GO" id="GO:0015990">
    <property type="term" value="P:electron transport coupled proton transport"/>
    <property type="evidence" value="ECO:0007669"/>
    <property type="project" value="TreeGrafter"/>
</dbReference>
<dbReference type="FunFam" id="3.40.50.12280:FF:000001">
    <property type="entry name" value="NADH-quinone oxidoreductase subunit B 2"/>
    <property type="match status" value="1"/>
</dbReference>
<dbReference type="Gene3D" id="3.40.50.12280">
    <property type="match status" value="1"/>
</dbReference>
<dbReference type="HAMAP" id="MF_01356">
    <property type="entry name" value="NDH1_NuoB"/>
    <property type="match status" value="1"/>
</dbReference>
<dbReference type="InterPro" id="IPR006137">
    <property type="entry name" value="NADH_UbQ_OxRdtase-like_20kDa"/>
</dbReference>
<dbReference type="InterPro" id="IPR006138">
    <property type="entry name" value="NADH_UQ_OxRdtase_20Kd_su"/>
</dbReference>
<dbReference type="NCBIfam" id="TIGR01957">
    <property type="entry name" value="nuoB_fam"/>
    <property type="match status" value="1"/>
</dbReference>
<dbReference type="NCBIfam" id="NF005012">
    <property type="entry name" value="PRK06411.1"/>
    <property type="match status" value="1"/>
</dbReference>
<dbReference type="PANTHER" id="PTHR11995">
    <property type="entry name" value="NADH DEHYDROGENASE"/>
    <property type="match status" value="1"/>
</dbReference>
<dbReference type="PANTHER" id="PTHR11995:SF14">
    <property type="entry name" value="NADH DEHYDROGENASE [UBIQUINONE] IRON-SULFUR PROTEIN 7, MITOCHONDRIAL"/>
    <property type="match status" value="1"/>
</dbReference>
<dbReference type="Pfam" id="PF01058">
    <property type="entry name" value="Oxidored_q6"/>
    <property type="match status" value="1"/>
</dbReference>
<dbReference type="SUPFAM" id="SSF56770">
    <property type="entry name" value="HydA/Nqo6-like"/>
    <property type="match status" value="1"/>
</dbReference>
<dbReference type="PROSITE" id="PS01150">
    <property type="entry name" value="COMPLEX1_20K"/>
    <property type="match status" value="1"/>
</dbReference>
<name>NUOB_HYDCU</name>
<gene>
    <name evidence="2" type="primary">nuoB</name>
    <name type="ordered locus">Tcr_0818</name>
</gene>
<accession>Q31HF9</accession>
<feature type="chain" id="PRO_0000358502" description="NADH-quinone oxidoreductase subunit B">
    <location>
        <begin position="1"/>
        <end position="158"/>
    </location>
</feature>
<feature type="binding site" evidence="2">
    <location>
        <position position="37"/>
    </location>
    <ligand>
        <name>[4Fe-4S] cluster</name>
        <dbReference type="ChEBI" id="CHEBI:49883"/>
    </ligand>
</feature>
<feature type="binding site" evidence="2">
    <location>
        <position position="38"/>
    </location>
    <ligand>
        <name>[4Fe-4S] cluster</name>
        <dbReference type="ChEBI" id="CHEBI:49883"/>
    </ligand>
</feature>
<feature type="binding site" evidence="2">
    <location>
        <position position="102"/>
    </location>
    <ligand>
        <name>[4Fe-4S] cluster</name>
        <dbReference type="ChEBI" id="CHEBI:49883"/>
    </ligand>
</feature>
<feature type="binding site" evidence="2">
    <location>
        <position position="132"/>
    </location>
    <ligand>
        <name>[4Fe-4S] cluster</name>
        <dbReference type="ChEBI" id="CHEBI:49883"/>
    </ligand>
</feature>
<keyword id="KW-0004">4Fe-4S</keyword>
<keyword id="KW-0997">Cell inner membrane</keyword>
<keyword id="KW-1003">Cell membrane</keyword>
<keyword id="KW-0408">Iron</keyword>
<keyword id="KW-0411">Iron-sulfur</keyword>
<keyword id="KW-0472">Membrane</keyword>
<keyword id="KW-0479">Metal-binding</keyword>
<keyword id="KW-0520">NAD</keyword>
<keyword id="KW-0874">Quinone</keyword>
<keyword id="KW-1278">Translocase</keyword>
<keyword id="KW-0813">Transport</keyword>
<keyword id="KW-0830">Ubiquinone</keyword>
<reference key="1">
    <citation type="journal article" date="2006" name="PLoS Biol.">
        <title>The genome of deep-sea vent chemolithoautotroph Thiomicrospira crunogena XCL-2.</title>
        <authorList>
            <person name="Scott K.M."/>
            <person name="Sievert S.M."/>
            <person name="Abril F.N."/>
            <person name="Ball L.A."/>
            <person name="Barrett C.J."/>
            <person name="Blake R.A."/>
            <person name="Boller A.J."/>
            <person name="Chain P.S.G."/>
            <person name="Clark J.A."/>
            <person name="Davis C.R."/>
            <person name="Detter C."/>
            <person name="Do K.F."/>
            <person name="Dobrinski K.P."/>
            <person name="Faza B.I."/>
            <person name="Fitzpatrick K.A."/>
            <person name="Freyermuth S.K."/>
            <person name="Harmer T.L."/>
            <person name="Hauser L.J."/>
            <person name="Huegler M."/>
            <person name="Kerfeld C.A."/>
            <person name="Klotz M.G."/>
            <person name="Kong W.W."/>
            <person name="Land M."/>
            <person name="Lapidus A."/>
            <person name="Larimer F.W."/>
            <person name="Longo D.L."/>
            <person name="Lucas S."/>
            <person name="Malfatti S.A."/>
            <person name="Massey S.E."/>
            <person name="Martin D.D."/>
            <person name="McCuddin Z."/>
            <person name="Meyer F."/>
            <person name="Moore J.L."/>
            <person name="Ocampo L.H. Jr."/>
            <person name="Paul J.H."/>
            <person name="Paulsen I.T."/>
            <person name="Reep D.K."/>
            <person name="Ren Q."/>
            <person name="Ross R.L."/>
            <person name="Sato P.Y."/>
            <person name="Thomas P."/>
            <person name="Tinkham L.E."/>
            <person name="Zeruth G.T."/>
        </authorList>
    </citation>
    <scope>NUCLEOTIDE SEQUENCE [LARGE SCALE GENOMIC DNA]</scope>
    <source>
        <strain>DSM 25203 / XCL-2</strain>
    </source>
</reference>
<sequence>MGIEGVLKEGVVTTSADKLINWARTGSLWPMTFGLACCAVEMMHAGASRYDLDRFGIIFRPSPRQSDVMIVAGTLVNKMAPALRKVYDQMAEPRWVISMGSCANGGGYYHYSYSVVRGCDRIVPVDVYVPGCPPTAEALLYGIIQLQNKIKRTNTIAR</sequence>
<evidence type="ECO:0000250" key="1"/>
<evidence type="ECO:0000255" key="2">
    <source>
        <dbReference type="HAMAP-Rule" id="MF_01356"/>
    </source>
</evidence>